<organism>
    <name type="scientific">Mycobacterium leprae (strain TN)</name>
    <dbReference type="NCBI Taxonomy" id="272631"/>
    <lineage>
        <taxon>Bacteria</taxon>
        <taxon>Bacillati</taxon>
        <taxon>Actinomycetota</taxon>
        <taxon>Actinomycetes</taxon>
        <taxon>Mycobacteriales</taxon>
        <taxon>Mycobacteriaceae</taxon>
        <taxon>Mycobacterium</taxon>
    </lineage>
</organism>
<gene>
    <name evidence="1" type="primary">add</name>
    <name type="ordered locus">ML0700</name>
    <name type="ORF">L308_C2_206</name>
</gene>
<reference key="1">
    <citation type="submission" date="1994-03" db="EMBL/GenBank/DDBJ databases">
        <authorList>
            <person name="Smith D.R."/>
            <person name="Robison K."/>
        </authorList>
    </citation>
    <scope>NUCLEOTIDE SEQUENCE [GENOMIC DNA]</scope>
</reference>
<reference key="2">
    <citation type="journal article" date="2001" name="Nature">
        <title>Massive gene decay in the leprosy bacillus.</title>
        <authorList>
            <person name="Cole S.T."/>
            <person name="Eiglmeier K."/>
            <person name="Parkhill J."/>
            <person name="James K.D."/>
            <person name="Thomson N.R."/>
            <person name="Wheeler P.R."/>
            <person name="Honore N."/>
            <person name="Garnier T."/>
            <person name="Churcher C.M."/>
            <person name="Harris D.E."/>
            <person name="Mungall K.L."/>
            <person name="Basham D."/>
            <person name="Brown D."/>
            <person name="Chillingworth T."/>
            <person name="Connor R."/>
            <person name="Davies R.M."/>
            <person name="Devlin K."/>
            <person name="Duthoy S."/>
            <person name="Feltwell T."/>
            <person name="Fraser A."/>
            <person name="Hamlin N."/>
            <person name="Holroyd S."/>
            <person name="Hornsby T."/>
            <person name="Jagels K."/>
            <person name="Lacroix C."/>
            <person name="Maclean J."/>
            <person name="Moule S."/>
            <person name="Murphy L.D."/>
            <person name="Oliver K."/>
            <person name="Quail M.A."/>
            <person name="Rajandream M.A."/>
            <person name="Rutherford K.M."/>
            <person name="Rutter S."/>
            <person name="Seeger K."/>
            <person name="Simon S."/>
            <person name="Simmonds M."/>
            <person name="Skelton J."/>
            <person name="Squares R."/>
            <person name="Squares S."/>
            <person name="Stevens K."/>
            <person name="Taylor K."/>
            <person name="Whitehead S."/>
            <person name="Woodward J.R."/>
            <person name="Barrell B.G."/>
        </authorList>
    </citation>
    <scope>NUCLEOTIDE SEQUENCE [LARGE SCALE GENOMIC DNA]</scope>
    <source>
        <strain>TN</strain>
    </source>
</reference>
<name>ADD_MYCLE</name>
<dbReference type="EC" id="3.5.4.4" evidence="1"/>
<dbReference type="EMBL" id="U00022">
    <property type="protein sequence ID" value="AAA17330.1"/>
    <property type="status" value="ALT_INIT"/>
    <property type="molecule type" value="Genomic_DNA"/>
</dbReference>
<dbReference type="EMBL" id="AL583919">
    <property type="protein sequence ID" value="CAC30209.1"/>
    <property type="molecule type" value="Genomic_DNA"/>
</dbReference>
<dbReference type="PIR" id="E86996">
    <property type="entry name" value="E86996"/>
</dbReference>
<dbReference type="PIR" id="S73031">
    <property type="entry name" value="S73031"/>
</dbReference>
<dbReference type="RefSeq" id="NP_301559.1">
    <property type="nucleotide sequence ID" value="NC_002677.1"/>
</dbReference>
<dbReference type="RefSeq" id="WP_010907883.1">
    <property type="nucleotide sequence ID" value="NC_002677.1"/>
</dbReference>
<dbReference type="SMR" id="Q9CCL9"/>
<dbReference type="STRING" id="272631.gene:17574524"/>
<dbReference type="KEGG" id="mle:ML0700"/>
<dbReference type="PATRIC" id="fig|272631.5.peg.1259"/>
<dbReference type="Leproma" id="ML0700"/>
<dbReference type="eggNOG" id="COG1816">
    <property type="taxonomic scope" value="Bacteria"/>
</dbReference>
<dbReference type="HOGENOM" id="CLU_039228_0_0_11"/>
<dbReference type="OrthoDB" id="9779574at2"/>
<dbReference type="Proteomes" id="UP000000806">
    <property type="component" value="Chromosome"/>
</dbReference>
<dbReference type="GO" id="GO:0005829">
    <property type="term" value="C:cytosol"/>
    <property type="evidence" value="ECO:0007669"/>
    <property type="project" value="TreeGrafter"/>
</dbReference>
<dbReference type="GO" id="GO:0046936">
    <property type="term" value="F:2'-deoxyadenosine deaminase activity"/>
    <property type="evidence" value="ECO:0007669"/>
    <property type="project" value="RHEA"/>
</dbReference>
<dbReference type="GO" id="GO:0004000">
    <property type="term" value="F:adenosine deaminase activity"/>
    <property type="evidence" value="ECO:0007669"/>
    <property type="project" value="UniProtKB-UniRule"/>
</dbReference>
<dbReference type="GO" id="GO:0008270">
    <property type="term" value="F:zinc ion binding"/>
    <property type="evidence" value="ECO:0007669"/>
    <property type="project" value="UniProtKB-UniRule"/>
</dbReference>
<dbReference type="GO" id="GO:0006154">
    <property type="term" value="P:adenosine catabolic process"/>
    <property type="evidence" value="ECO:0007669"/>
    <property type="project" value="TreeGrafter"/>
</dbReference>
<dbReference type="GO" id="GO:0043103">
    <property type="term" value="P:hypoxanthine salvage"/>
    <property type="evidence" value="ECO:0007669"/>
    <property type="project" value="TreeGrafter"/>
</dbReference>
<dbReference type="GO" id="GO:0046103">
    <property type="term" value="P:inosine biosynthetic process"/>
    <property type="evidence" value="ECO:0007669"/>
    <property type="project" value="TreeGrafter"/>
</dbReference>
<dbReference type="GO" id="GO:0009117">
    <property type="term" value="P:nucleotide metabolic process"/>
    <property type="evidence" value="ECO:0007669"/>
    <property type="project" value="UniProtKB-KW"/>
</dbReference>
<dbReference type="GO" id="GO:0009168">
    <property type="term" value="P:purine ribonucleoside monophosphate biosynthetic process"/>
    <property type="evidence" value="ECO:0007669"/>
    <property type="project" value="UniProtKB-UniRule"/>
</dbReference>
<dbReference type="FunFam" id="3.20.20.140:FF:000020">
    <property type="entry name" value="Adenosine deaminase"/>
    <property type="match status" value="1"/>
</dbReference>
<dbReference type="Gene3D" id="3.20.20.140">
    <property type="entry name" value="Metal-dependent hydrolases"/>
    <property type="match status" value="1"/>
</dbReference>
<dbReference type="HAMAP" id="MF_00540">
    <property type="entry name" value="A_deaminase"/>
    <property type="match status" value="1"/>
</dbReference>
<dbReference type="InterPro" id="IPR028893">
    <property type="entry name" value="A_deaminase"/>
</dbReference>
<dbReference type="InterPro" id="IPR001365">
    <property type="entry name" value="A_deaminase_dom"/>
</dbReference>
<dbReference type="InterPro" id="IPR006330">
    <property type="entry name" value="Ado/ade_deaminase"/>
</dbReference>
<dbReference type="InterPro" id="IPR032466">
    <property type="entry name" value="Metal_Hydrolase"/>
</dbReference>
<dbReference type="NCBIfam" id="TIGR01430">
    <property type="entry name" value="aden_deam"/>
    <property type="match status" value="1"/>
</dbReference>
<dbReference type="NCBIfam" id="NF006847">
    <property type="entry name" value="PRK09358.1-2"/>
    <property type="match status" value="1"/>
</dbReference>
<dbReference type="PANTHER" id="PTHR11409">
    <property type="entry name" value="ADENOSINE DEAMINASE"/>
    <property type="match status" value="1"/>
</dbReference>
<dbReference type="PANTHER" id="PTHR11409:SF43">
    <property type="entry name" value="ADENOSINE DEAMINASE"/>
    <property type="match status" value="1"/>
</dbReference>
<dbReference type="Pfam" id="PF00962">
    <property type="entry name" value="A_deaminase"/>
    <property type="match status" value="1"/>
</dbReference>
<dbReference type="SUPFAM" id="SSF51556">
    <property type="entry name" value="Metallo-dependent hydrolases"/>
    <property type="match status" value="1"/>
</dbReference>
<feature type="chain" id="PRO_0000194373" description="Adenosine deaminase">
    <location>
        <begin position="1"/>
        <end position="362"/>
    </location>
</feature>
<feature type="active site" description="Proton donor" evidence="1">
    <location>
        <position position="211"/>
    </location>
</feature>
<feature type="binding site" evidence="1">
    <location>
        <position position="19"/>
    </location>
    <ligand>
        <name>Zn(2+)</name>
        <dbReference type="ChEBI" id="CHEBI:29105"/>
        <note>catalytic</note>
    </ligand>
</feature>
<feature type="binding site" evidence="1">
    <location>
        <position position="21"/>
    </location>
    <ligand>
        <name>substrate</name>
    </ligand>
</feature>
<feature type="binding site" evidence="1">
    <location>
        <position position="21"/>
    </location>
    <ligand>
        <name>Zn(2+)</name>
        <dbReference type="ChEBI" id="CHEBI:29105"/>
        <note>catalytic</note>
    </ligand>
</feature>
<feature type="binding site" evidence="1">
    <location>
        <position position="23"/>
    </location>
    <ligand>
        <name>substrate</name>
    </ligand>
</feature>
<feature type="binding site" evidence="1">
    <location>
        <position position="181"/>
    </location>
    <ligand>
        <name>substrate</name>
    </ligand>
</feature>
<feature type="binding site" evidence="1">
    <location>
        <position position="208"/>
    </location>
    <ligand>
        <name>Zn(2+)</name>
        <dbReference type="ChEBI" id="CHEBI:29105"/>
        <note>catalytic</note>
    </ligand>
</feature>
<feature type="binding site" evidence="1">
    <location>
        <position position="300"/>
    </location>
    <ligand>
        <name>Zn(2+)</name>
        <dbReference type="ChEBI" id="CHEBI:29105"/>
        <note>catalytic</note>
    </ligand>
</feature>
<feature type="site" description="Important for catalytic activity" evidence="1">
    <location>
        <position position="232"/>
    </location>
</feature>
<protein>
    <recommendedName>
        <fullName evidence="1">Adenosine deaminase</fullName>
        <ecNumber evidence="1">3.5.4.4</ecNumber>
    </recommendedName>
    <alternativeName>
        <fullName evidence="1">Adenosine aminohydrolase</fullName>
    </alternativeName>
</protein>
<evidence type="ECO:0000255" key="1">
    <source>
        <dbReference type="HAMAP-Rule" id="MF_00540"/>
    </source>
</evidence>
<evidence type="ECO:0000305" key="2"/>
<accession>Q9CCL9</accession>
<accession>Q49907</accession>
<keyword id="KW-0378">Hydrolase</keyword>
<keyword id="KW-0479">Metal-binding</keyword>
<keyword id="KW-0546">Nucleotide metabolism</keyword>
<keyword id="KW-1185">Reference proteome</keyword>
<keyword id="KW-0862">Zinc</keyword>
<sequence>MNTPLHLENIKQAPKALLHDHLDGGLRPATVLDIAGQVGYDRLPATDVESLETWFRTASHSGSLERYLEPFSHTVAVMQTPEALHRVAYECVEDLAADSVVYAEVRFAPELHIDEGLSFDEVLASVLAGFADGERACAAEGNAITVRCLVTAMRHAAMSREIAELAIRFRDKGVVGFDIAGAEAGHPPTRHLDAFEYMRSNNARFTIHAGEAFGLPSIHEAIAFCGADRLGHGVRIVDDIDVDPGGGIRLGPLASILRDKRIPLELCPSSNLQTGAVASITEHPFDLLAWARFRVTVNTDNRLMSDTSMSLEMHRLVEAFGYGWGDLERFTINAMKSAFIPFDQRLAIIDEVIKPRFAVLVG</sequence>
<proteinExistence type="inferred from homology"/>
<comment type="function">
    <text evidence="1">Catalyzes the hydrolytic deamination of adenosine and 2-deoxyadenosine.</text>
</comment>
<comment type="catalytic activity">
    <reaction evidence="1">
        <text>adenosine + H2O + H(+) = inosine + NH4(+)</text>
        <dbReference type="Rhea" id="RHEA:24408"/>
        <dbReference type="ChEBI" id="CHEBI:15377"/>
        <dbReference type="ChEBI" id="CHEBI:15378"/>
        <dbReference type="ChEBI" id="CHEBI:16335"/>
        <dbReference type="ChEBI" id="CHEBI:17596"/>
        <dbReference type="ChEBI" id="CHEBI:28938"/>
        <dbReference type="EC" id="3.5.4.4"/>
    </reaction>
    <physiologicalReaction direction="left-to-right" evidence="1">
        <dbReference type="Rhea" id="RHEA:24409"/>
    </physiologicalReaction>
</comment>
<comment type="catalytic activity">
    <reaction evidence="1">
        <text>2'-deoxyadenosine + H2O + H(+) = 2'-deoxyinosine + NH4(+)</text>
        <dbReference type="Rhea" id="RHEA:28190"/>
        <dbReference type="ChEBI" id="CHEBI:15377"/>
        <dbReference type="ChEBI" id="CHEBI:15378"/>
        <dbReference type="ChEBI" id="CHEBI:17256"/>
        <dbReference type="ChEBI" id="CHEBI:28938"/>
        <dbReference type="ChEBI" id="CHEBI:28997"/>
        <dbReference type="EC" id="3.5.4.4"/>
    </reaction>
    <physiologicalReaction direction="left-to-right" evidence="1">
        <dbReference type="Rhea" id="RHEA:28191"/>
    </physiologicalReaction>
</comment>
<comment type="cofactor">
    <cofactor evidence="1">
        <name>Zn(2+)</name>
        <dbReference type="ChEBI" id="CHEBI:29105"/>
    </cofactor>
    <text evidence="1">Binds 1 zinc ion per subunit.</text>
</comment>
<comment type="similarity">
    <text evidence="1">Belongs to the metallo-dependent hydrolases superfamily. Adenosine and AMP deaminases family. Adenosine deaminase subfamily.</text>
</comment>
<comment type="sequence caution" evidence="2">
    <conflict type="erroneous initiation">
        <sequence resource="EMBL-CDS" id="AAA17330"/>
    </conflict>
</comment>